<comment type="function">
    <text evidence="1">Catalyzes the isomerization of L-xylulose-5-phosphate to L-ribulose-5-phosphate. Is involved in the anaerobic L-ascorbate utilization.</text>
</comment>
<comment type="catalytic activity">
    <reaction evidence="1">
        <text>L-ribulose 5-phosphate = L-xylulose 5-phosphate</text>
        <dbReference type="Rhea" id="RHEA:18497"/>
        <dbReference type="ChEBI" id="CHEBI:57829"/>
        <dbReference type="ChEBI" id="CHEBI:58226"/>
        <dbReference type="EC" id="5.1.3.22"/>
    </reaction>
</comment>
<comment type="pathway">
    <text evidence="1">Cofactor degradation; L-ascorbate degradation; D-xylulose 5-phosphate from L-ascorbate: step 3/4.</text>
</comment>
<comment type="induction">
    <text evidence="1">Induced by L-ascorbate. Repressed by UlaR.</text>
</comment>
<comment type="similarity">
    <text evidence="1">Belongs to the L-ribulose-5-phosphate 3-epimerase family.</text>
</comment>
<protein>
    <recommendedName>
        <fullName evidence="1">L-ribulose-5-phosphate 3-epimerase UlaE</fullName>
        <ecNumber evidence="1">5.1.3.22</ecNumber>
    </recommendedName>
    <alternativeName>
        <fullName evidence="1">L-ascorbate utilization protein E</fullName>
    </alternativeName>
    <alternativeName>
        <fullName evidence="1">L-xylulose-5-phosphate 3-epimerase</fullName>
    </alternativeName>
</protein>
<sequence>MLSKQIPLGIYEKALPAGECWLERLQLAKKLGFDFVEMSVDETDDRLSRLDWSREQRLALVNAIVETGVRVPSMCLSAHRRFPLGSEDDAVRAQGLEIMRKAIQFAQDVGIRVIQLAGYDVYYQEANNETRRRFRDGLKESVEMASRAQVTLAMEIMDYPLMNSISKALGYAHYLNNPWFQLYPDIGNLSAWDNDVQMELQAGIGHIVAVHVKDTKPGVFKNVPFGEGVVDFERCFETLKQSGYCGPYLIEMWSETAEDPAAEVAKARDWVKARMAKAGMVEAA</sequence>
<feature type="chain" id="PRO_1000188829" description="L-ribulose-5-phosphate 3-epimerase UlaE">
    <location>
        <begin position="1"/>
        <end position="284"/>
    </location>
</feature>
<accession>B1LQL7</accession>
<proteinExistence type="inferred from homology"/>
<gene>
    <name evidence="1" type="primary">ulaE</name>
    <name type="ordered locus">EcSMS35_4668</name>
</gene>
<dbReference type="EC" id="5.1.3.22" evidence="1"/>
<dbReference type="EMBL" id="CP000970">
    <property type="protein sequence ID" value="ACB16824.1"/>
    <property type="molecule type" value="Genomic_DNA"/>
</dbReference>
<dbReference type="RefSeq" id="WP_000949488.1">
    <property type="nucleotide sequence ID" value="NC_010498.1"/>
</dbReference>
<dbReference type="SMR" id="B1LQL7"/>
<dbReference type="KEGG" id="ecm:EcSMS35_4668"/>
<dbReference type="HOGENOM" id="CLU_082738_0_0_6"/>
<dbReference type="UniPathway" id="UPA00263">
    <property type="reaction ID" value="UER00379"/>
</dbReference>
<dbReference type="Proteomes" id="UP000007011">
    <property type="component" value="Chromosome"/>
</dbReference>
<dbReference type="GO" id="GO:0016861">
    <property type="term" value="F:intramolecular oxidoreductase activity, interconverting aldoses and ketoses"/>
    <property type="evidence" value="ECO:0007669"/>
    <property type="project" value="InterPro"/>
</dbReference>
<dbReference type="GO" id="GO:0034015">
    <property type="term" value="F:L-ribulose-5-phosphate 3-epimerase activity"/>
    <property type="evidence" value="ECO:0007669"/>
    <property type="project" value="UniProtKB-UniRule"/>
</dbReference>
<dbReference type="GO" id="GO:0019854">
    <property type="term" value="P:L-ascorbic acid catabolic process"/>
    <property type="evidence" value="ECO:0007669"/>
    <property type="project" value="UniProtKB-UniRule"/>
</dbReference>
<dbReference type="FunFam" id="3.20.20.150:FF:000003">
    <property type="entry name" value="L-ribulose-5-phosphate 3-epimerase UlaE"/>
    <property type="match status" value="1"/>
</dbReference>
<dbReference type="Gene3D" id="3.20.20.150">
    <property type="entry name" value="Divalent-metal-dependent TIM barrel enzymes"/>
    <property type="match status" value="1"/>
</dbReference>
<dbReference type="HAMAP" id="MF_01951">
    <property type="entry name" value="UlaE"/>
    <property type="match status" value="1"/>
</dbReference>
<dbReference type="InterPro" id="IPR004560">
    <property type="entry name" value="L-Ru-5P_3-Epase"/>
</dbReference>
<dbReference type="InterPro" id="IPR023492">
    <property type="entry name" value="L-Ru-5P_3-Epase_Enterobacteria"/>
</dbReference>
<dbReference type="InterPro" id="IPR050417">
    <property type="entry name" value="Sugar_Epim/Isomerase"/>
</dbReference>
<dbReference type="InterPro" id="IPR036237">
    <property type="entry name" value="Xyl_isomerase-like_sf"/>
</dbReference>
<dbReference type="InterPro" id="IPR013022">
    <property type="entry name" value="Xyl_isomerase-like_TIM-brl"/>
</dbReference>
<dbReference type="NCBIfam" id="TIGR00542">
    <property type="entry name" value="hxl6Piso_put"/>
    <property type="match status" value="1"/>
</dbReference>
<dbReference type="NCBIfam" id="NF009688">
    <property type="entry name" value="PRK13209.1"/>
    <property type="match status" value="1"/>
</dbReference>
<dbReference type="NCBIfam" id="NF009689">
    <property type="entry name" value="PRK13210.1"/>
    <property type="match status" value="1"/>
</dbReference>
<dbReference type="PANTHER" id="PTHR43489">
    <property type="entry name" value="ISOMERASE"/>
    <property type="match status" value="1"/>
</dbReference>
<dbReference type="PANTHER" id="PTHR43489:SF8">
    <property type="entry name" value="L-RIBULOSE-5-PHOSPHATE 3-EPIMERASE ULAE"/>
    <property type="match status" value="1"/>
</dbReference>
<dbReference type="Pfam" id="PF01261">
    <property type="entry name" value="AP_endonuc_2"/>
    <property type="match status" value="1"/>
</dbReference>
<dbReference type="SUPFAM" id="SSF51658">
    <property type="entry name" value="Xylose isomerase-like"/>
    <property type="match status" value="1"/>
</dbReference>
<reference key="1">
    <citation type="journal article" date="2008" name="J. Bacteriol.">
        <title>Insights into the environmental resistance gene pool from the genome sequence of the multidrug-resistant environmental isolate Escherichia coli SMS-3-5.</title>
        <authorList>
            <person name="Fricke W.F."/>
            <person name="Wright M.S."/>
            <person name="Lindell A.H."/>
            <person name="Harkins D.M."/>
            <person name="Baker-Austin C."/>
            <person name="Ravel J."/>
            <person name="Stepanauskas R."/>
        </authorList>
    </citation>
    <scope>NUCLEOTIDE SEQUENCE [LARGE SCALE GENOMIC DNA]</scope>
    <source>
        <strain>SMS-3-5 / SECEC</strain>
    </source>
</reference>
<evidence type="ECO:0000255" key="1">
    <source>
        <dbReference type="HAMAP-Rule" id="MF_01951"/>
    </source>
</evidence>
<organism>
    <name type="scientific">Escherichia coli (strain SMS-3-5 / SECEC)</name>
    <dbReference type="NCBI Taxonomy" id="439855"/>
    <lineage>
        <taxon>Bacteria</taxon>
        <taxon>Pseudomonadati</taxon>
        <taxon>Pseudomonadota</taxon>
        <taxon>Gammaproteobacteria</taxon>
        <taxon>Enterobacterales</taxon>
        <taxon>Enterobacteriaceae</taxon>
        <taxon>Escherichia</taxon>
    </lineage>
</organism>
<name>ULAE_ECOSM</name>
<keyword id="KW-0413">Isomerase</keyword>